<sequence>MNLEALCKEAELSFYDDELVSENGRKIYRIYVQKEGGVNLDDCARLSEILSPIFDVEPPVNGEYFLEVSSPGLERKLSKIEHFAKSIGELVKITTNEKEKFEAKIIAVDDENITLENLENKEKTTINFNDIKKARTFIIW</sequence>
<reference key="1">
    <citation type="submission" date="2006-12" db="EMBL/GenBank/DDBJ databases">
        <authorList>
            <person name="Fouts D.E."/>
            <person name="Nelson K.E."/>
            <person name="Sebastian Y."/>
        </authorList>
    </citation>
    <scope>NUCLEOTIDE SEQUENCE [LARGE SCALE GENOMIC DNA]</scope>
    <source>
        <strain>81-176</strain>
    </source>
</reference>
<evidence type="ECO:0000255" key="1">
    <source>
        <dbReference type="HAMAP-Rule" id="MF_01077"/>
    </source>
</evidence>
<keyword id="KW-0963">Cytoplasm</keyword>
<keyword id="KW-0690">Ribosome biogenesis</keyword>
<feature type="chain" id="PRO_1000064700" description="Ribosome maturation factor RimP">
    <location>
        <begin position="1"/>
        <end position="140"/>
    </location>
</feature>
<protein>
    <recommendedName>
        <fullName evidence="1">Ribosome maturation factor RimP</fullName>
    </recommendedName>
</protein>
<organism>
    <name type="scientific">Campylobacter jejuni subsp. jejuni serotype O:23/36 (strain 81-176)</name>
    <dbReference type="NCBI Taxonomy" id="354242"/>
    <lineage>
        <taxon>Bacteria</taxon>
        <taxon>Pseudomonadati</taxon>
        <taxon>Campylobacterota</taxon>
        <taxon>Epsilonproteobacteria</taxon>
        <taxon>Campylobacterales</taxon>
        <taxon>Campylobacteraceae</taxon>
        <taxon>Campylobacter</taxon>
    </lineage>
</organism>
<proteinExistence type="inferred from homology"/>
<dbReference type="EMBL" id="CP000538">
    <property type="protein sequence ID" value="EAQ73102.1"/>
    <property type="molecule type" value="Genomic_DNA"/>
</dbReference>
<dbReference type="RefSeq" id="WP_002868934.1">
    <property type="nucleotide sequence ID" value="NC_008787.1"/>
</dbReference>
<dbReference type="SMR" id="A1VXM1"/>
<dbReference type="KEGG" id="cjj:CJJ81176_0173"/>
<dbReference type="eggNOG" id="COG0779">
    <property type="taxonomic scope" value="Bacteria"/>
</dbReference>
<dbReference type="HOGENOM" id="CLU_070525_2_2_7"/>
<dbReference type="Proteomes" id="UP000000646">
    <property type="component" value="Chromosome"/>
</dbReference>
<dbReference type="GO" id="GO:0005829">
    <property type="term" value="C:cytosol"/>
    <property type="evidence" value="ECO:0007669"/>
    <property type="project" value="TreeGrafter"/>
</dbReference>
<dbReference type="GO" id="GO:0000028">
    <property type="term" value="P:ribosomal small subunit assembly"/>
    <property type="evidence" value="ECO:0007669"/>
    <property type="project" value="TreeGrafter"/>
</dbReference>
<dbReference type="GO" id="GO:0006412">
    <property type="term" value="P:translation"/>
    <property type="evidence" value="ECO:0007669"/>
    <property type="project" value="TreeGrafter"/>
</dbReference>
<dbReference type="CDD" id="cd01734">
    <property type="entry name" value="YlxS_C"/>
    <property type="match status" value="1"/>
</dbReference>
<dbReference type="Gene3D" id="2.30.30.180">
    <property type="entry name" value="Ribosome maturation factor RimP, C-terminal domain"/>
    <property type="match status" value="1"/>
</dbReference>
<dbReference type="Gene3D" id="3.30.300.70">
    <property type="entry name" value="RimP-like superfamily, N-terminal"/>
    <property type="match status" value="1"/>
</dbReference>
<dbReference type="HAMAP" id="MF_01077">
    <property type="entry name" value="RimP"/>
    <property type="match status" value="1"/>
</dbReference>
<dbReference type="InterPro" id="IPR003728">
    <property type="entry name" value="Ribosome_maturation_RimP"/>
</dbReference>
<dbReference type="InterPro" id="IPR028998">
    <property type="entry name" value="RimP_C"/>
</dbReference>
<dbReference type="InterPro" id="IPR036847">
    <property type="entry name" value="RimP_C_sf"/>
</dbReference>
<dbReference type="InterPro" id="IPR028989">
    <property type="entry name" value="RimP_N"/>
</dbReference>
<dbReference type="InterPro" id="IPR035956">
    <property type="entry name" value="RimP_N_sf"/>
</dbReference>
<dbReference type="NCBIfam" id="NF011232">
    <property type="entry name" value="PRK14639.1"/>
    <property type="match status" value="1"/>
</dbReference>
<dbReference type="PANTHER" id="PTHR33867">
    <property type="entry name" value="RIBOSOME MATURATION FACTOR RIMP"/>
    <property type="match status" value="1"/>
</dbReference>
<dbReference type="PANTHER" id="PTHR33867:SF1">
    <property type="entry name" value="RIBOSOME MATURATION FACTOR RIMP"/>
    <property type="match status" value="1"/>
</dbReference>
<dbReference type="Pfam" id="PF17384">
    <property type="entry name" value="DUF150_C"/>
    <property type="match status" value="1"/>
</dbReference>
<dbReference type="Pfam" id="PF02576">
    <property type="entry name" value="RimP_N"/>
    <property type="match status" value="1"/>
</dbReference>
<dbReference type="SUPFAM" id="SSF74942">
    <property type="entry name" value="YhbC-like, C-terminal domain"/>
    <property type="match status" value="1"/>
</dbReference>
<dbReference type="SUPFAM" id="SSF75420">
    <property type="entry name" value="YhbC-like, N-terminal domain"/>
    <property type="match status" value="1"/>
</dbReference>
<comment type="function">
    <text evidence="1">Required for maturation of 30S ribosomal subunits.</text>
</comment>
<comment type="subcellular location">
    <subcellularLocation>
        <location evidence="1">Cytoplasm</location>
    </subcellularLocation>
</comment>
<comment type="similarity">
    <text evidence="1">Belongs to the RimP family.</text>
</comment>
<accession>A1VXM1</accession>
<gene>
    <name evidence="1" type="primary">rimP</name>
    <name type="ordered locus">CJJ81176_0173</name>
</gene>
<name>RIMP_CAMJJ</name>